<organism>
    <name type="scientific">Aliivibrio fischeri (strain ATCC 700601 / ES114)</name>
    <name type="common">Vibrio fischeri</name>
    <dbReference type="NCBI Taxonomy" id="312309"/>
    <lineage>
        <taxon>Bacteria</taxon>
        <taxon>Pseudomonadati</taxon>
        <taxon>Pseudomonadota</taxon>
        <taxon>Gammaproteobacteria</taxon>
        <taxon>Vibrionales</taxon>
        <taxon>Vibrionaceae</taxon>
        <taxon>Aliivibrio</taxon>
    </lineage>
</organism>
<protein>
    <recommendedName>
        <fullName evidence="1">Anaerobic nitric oxide reductase flavorubredoxin</fullName>
        <shortName evidence="1">FlRd</shortName>
        <shortName evidence="1">FlavoRb</shortName>
    </recommendedName>
</protein>
<reference key="1">
    <citation type="journal article" date="2005" name="Proc. Natl. Acad. Sci. U.S.A.">
        <title>Complete genome sequence of Vibrio fischeri: a symbiotic bacterium with pathogenic congeners.</title>
        <authorList>
            <person name="Ruby E.G."/>
            <person name="Urbanowski M."/>
            <person name="Campbell J."/>
            <person name="Dunn A."/>
            <person name="Faini M."/>
            <person name="Gunsalus R."/>
            <person name="Lostroh P."/>
            <person name="Lupp C."/>
            <person name="McCann J."/>
            <person name="Millikan D."/>
            <person name="Schaefer A."/>
            <person name="Stabb E."/>
            <person name="Stevens A."/>
            <person name="Visick K."/>
            <person name="Whistler C."/>
            <person name="Greenberg E.P."/>
        </authorList>
    </citation>
    <scope>NUCLEOTIDE SEQUENCE [LARGE SCALE GENOMIC DNA]</scope>
    <source>
        <strain>ATCC 700601 / ES114</strain>
    </source>
</reference>
<feature type="chain" id="PRO_0000305601" description="Anaerobic nitric oxide reductase flavorubredoxin">
    <location>
        <begin position="1"/>
        <end position="496"/>
    </location>
</feature>
<feature type="domain" description="Flavodoxin-like" evidence="1">
    <location>
        <begin position="254"/>
        <end position="393"/>
    </location>
</feature>
<feature type="domain" description="Rubredoxin-like" evidence="1">
    <location>
        <begin position="444"/>
        <end position="495"/>
    </location>
</feature>
<feature type="region of interest" description="Zinc metallo-hydrolase">
    <location>
        <begin position="30"/>
        <end position="210"/>
    </location>
</feature>
<feature type="binding site" evidence="1">
    <location>
        <position position="79"/>
    </location>
    <ligand>
        <name>Fe cation</name>
        <dbReference type="ChEBI" id="CHEBI:24875"/>
        <label>1</label>
    </ligand>
</feature>
<feature type="binding site" evidence="1">
    <location>
        <position position="81"/>
    </location>
    <ligand>
        <name>Fe cation</name>
        <dbReference type="ChEBI" id="CHEBI:24875"/>
        <label>1</label>
    </ligand>
</feature>
<feature type="binding site" evidence="1">
    <location>
        <position position="83"/>
    </location>
    <ligand>
        <name>Fe cation</name>
        <dbReference type="ChEBI" id="CHEBI:24875"/>
        <label>2</label>
    </ligand>
</feature>
<feature type="binding site" evidence="1">
    <location>
        <position position="147"/>
    </location>
    <ligand>
        <name>Fe cation</name>
        <dbReference type="ChEBI" id="CHEBI:24875"/>
        <label>1</label>
    </ligand>
</feature>
<feature type="binding site" evidence="1">
    <location>
        <position position="166"/>
    </location>
    <ligand>
        <name>Fe cation</name>
        <dbReference type="ChEBI" id="CHEBI:24875"/>
        <label>1</label>
    </ligand>
</feature>
<feature type="binding site" evidence="1">
    <location>
        <position position="166"/>
    </location>
    <ligand>
        <name>Fe cation</name>
        <dbReference type="ChEBI" id="CHEBI:24875"/>
        <label>2</label>
    </ligand>
</feature>
<feature type="binding site" evidence="1">
    <location>
        <position position="227"/>
    </location>
    <ligand>
        <name>Fe cation</name>
        <dbReference type="ChEBI" id="CHEBI:24875"/>
        <label>2</label>
    </ligand>
</feature>
<feature type="binding site" evidence="1">
    <location>
        <begin position="260"/>
        <end position="264"/>
    </location>
    <ligand>
        <name>FMN</name>
        <dbReference type="ChEBI" id="CHEBI:58210"/>
    </ligand>
</feature>
<feature type="binding site" evidence="1">
    <location>
        <begin position="342"/>
        <end position="369"/>
    </location>
    <ligand>
        <name>FMN</name>
        <dbReference type="ChEBI" id="CHEBI:58210"/>
    </ligand>
</feature>
<feature type="binding site" evidence="1">
    <location>
        <position position="449"/>
    </location>
    <ligand>
        <name>Fe cation</name>
        <dbReference type="ChEBI" id="CHEBI:24875"/>
        <label>3</label>
    </ligand>
</feature>
<feature type="binding site" evidence="1">
    <location>
        <position position="452"/>
    </location>
    <ligand>
        <name>Fe cation</name>
        <dbReference type="ChEBI" id="CHEBI:24875"/>
        <label>3</label>
    </ligand>
</feature>
<feature type="binding site" evidence="1">
    <location>
        <position position="482"/>
    </location>
    <ligand>
        <name>Fe cation</name>
        <dbReference type="ChEBI" id="CHEBI:24875"/>
        <label>3</label>
    </ligand>
</feature>
<feature type="binding site" evidence="1">
    <location>
        <position position="485"/>
    </location>
    <ligand>
        <name>Fe cation</name>
        <dbReference type="ChEBI" id="CHEBI:24875"/>
        <label>3</label>
    </ligand>
</feature>
<dbReference type="EMBL" id="CP000020">
    <property type="protein sequence ID" value="AAW86277.1"/>
    <property type="molecule type" value="Genomic_DNA"/>
</dbReference>
<dbReference type="RefSeq" id="WP_011262314.1">
    <property type="nucleotide sequence ID" value="NC_006840.2"/>
</dbReference>
<dbReference type="RefSeq" id="YP_205165.1">
    <property type="nucleotide sequence ID" value="NC_006840.2"/>
</dbReference>
<dbReference type="SMR" id="Q5E3W9"/>
<dbReference type="STRING" id="312309.VF_1782"/>
<dbReference type="EnsemblBacteria" id="AAW86277">
    <property type="protein sequence ID" value="AAW86277"/>
    <property type="gene ID" value="VF_1782"/>
</dbReference>
<dbReference type="GeneID" id="54164482"/>
<dbReference type="KEGG" id="vfi:VF_1782"/>
<dbReference type="PATRIC" id="fig|312309.11.peg.1808"/>
<dbReference type="eggNOG" id="COG0426">
    <property type="taxonomic scope" value="Bacteria"/>
</dbReference>
<dbReference type="eggNOG" id="COG1773">
    <property type="taxonomic scope" value="Bacteria"/>
</dbReference>
<dbReference type="HOGENOM" id="CLU_017490_0_1_6"/>
<dbReference type="OrthoDB" id="9800607at2"/>
<dbReference type="UniPathway" id="UPA00638"/>
<dbReference type="Proteomes" id="UP000000537">
    <property type="component" value="Chromosome I"/>
</dbReference>
<dbReference type="GO" id="GO:0005737">
    <property type="term" value="C:cytoplasm"/>
    <property type="evidence" value="ECO:0007669"/>
    <property type="project" value="UniProtKB-SubCell"/>
</dbReference>
<dbReference type="GO" id="GO:0009055">
    <property type="term" value="F:electron transfer activity"/>
    <property type="evidence" value="ECO:0007669"/>
    <property type="project" value="UniProtKB-UniRule"/>
</dbReference>
<dbReference type="GO" id="GO:0010181">
    <property type="term" value="F:FMN binding"/>
    <property type="evidence" value="ECO:0007669"/>
    <property type="project" value="InterPro"/>
</dbReference>
<dbReference type="GO" id="GO:0005506">
    <property type="term" value="F:iron ion binding"/>
    <property type="evidence" value="ECO:0007669"/>
    <property type="project" value="InterPro"/>
</dbReference>
<dbReference type="GO" id="GO:0016966">
    <property type="term" value="F:nitric oxide reductase activity"/>
    <property type="evidence" value="ECO:0007669"/>
    <property type="project" value="InterPro"/>
</dbReference>
<dbReference type="CDD" id="cd07709">
    <property type="entry name" value="flavodiiron_proteins_MBL-fold"/>
    <property type="match status" value="1"/>
</dbReference>
<dbReference type="CDD" id="cd00730">
    <property type="entry name" value="rubredoxin"/>
    <property type="match status" value="1"/>
</dbReference>
<dbReference type="Gene3D" id="2.20.28.10">
    <property type="match status" value="1"/>
</dbReference>
<dbReference type="Gene3D" id="3.40.50.360">
    <property type="match status" value="1"/>
</dbReference>
<dbReference type="Gene3D" id="3.60.15.10">
    <property type="entry name" value="Ribonuclease Z/Hydroxyacylglutathione hydrolase-like"/>
    <property type="match status" value="1"/>
</dbReference>
<dbReference type="HAMAP" id="MF_01312">
    <property type="entry name" value="NorV"/>
    <property type="match status" value="1"/>
</dbReference>
<dbReference type="InterPro" id="IPR023957">
    <property type="entry name" value="Anaer_NO_rdtase_flvorubredoxin"/>
</dbReference>
<dbReference type="InterPro" id="IPR008254">
    <property type="entry name" value="Flavodoxin/NO_synth"/>
</dbReference>
<dbReference type="InterPro" id="IPR029039">
    <property type="entry name" value="Flavoprotein-like_sf"/>
</dbReference>
<dbReference type="InterPro" id="IPR001279">
    <property type="entry name" value="Metallo-B-lactamas"/>
</dbReference>
<dbReference type="InterPro" id="IPR045761">
    <property type="entry name" value="ODP_dom"/>
</dbReference>
<dbReference type="InterPro" id="IPR036866">
    <property type="entry name" value="RibonucZ/Hydroxyglut_hydro"/>
</dbReference>
<dbReference type="InterPro" id="IPR024934">
    <property type="entry name" value="Rubredoxin-like_dom"/>
</dbReference>
<dbReference type="InterPro" id="IPR024935">
    <property type="entry name" value="Rubredoxin_dom"/>
</dbReference>
<dbReference type="NCBIfam" id="NF003954">
    <property type="entry name" value="PRK05452.1"/>
    <property type="match status" value="1"/>
</dbReference>
<dbReference type="PANTHER" id="PTHR43717">
    <property type="entry name" value="ANAEROBIC NITRIC OXIDE REDUCTASE FLAVORUBREDOXIN"/>
    <property type="match status" value="1"/>
</dbReference>
<dbReference type="PANTHER" id="PTHR43717:SF1">
    <property type="entry name" value="ANAEROBIC NITRIC OXIDE REDUCTASE FLAVORUBREDOXIN"/>
    <property type="match status" value="1"/>
</dbReference>
<dbReference type="Pfam" id="PF00258">
    <property type="entry name" value="Flavodoxin_1"/>
    <property type="match status" value="1"/>
</dbReference>
<dbReference type="Pfam" id="PF19583">
    <property type="entry name" value="ODP"/>
    <property type="match status" value="1"/>
</dbReference>
<dbReference type="Pfam" id="PF00301">
    <property type="entry name" value="Rubredoxin"/>
    <property type="match status" value="1"/>
</dbReference>
<dbReference type="PRINTS" id="PR00163">
    <property type="entry name" value="RUBREDOXIN"/>
</dbReference>
<dbReference type="SMART" id="SM00849">
    <property type="entry name" value="Lactamase_B"/>
    <property type="match status" value="1"/>
</dbReference>
<dbReference type="SUPFAM" id="SSF52218">
    <property type="entry name" value="Flavoproteins"/>
    <property type="match status" value="1"/>
</dbReference>
<dbReference type="SUPFAM" id="SSF56281">
    <property type="entry name" value="Metallo-hydrolase/oxidoreductase"/>
    <property type="match status" value="1"/>
</dbReference>
<dbReference type="SUPFAM" id="SSF57802">
    <property type="entry name" value="Rubredoxin-like"/>
    <property type="match status" value="1"/>
</dbReference>
<dbReference type="PROSITE" id="PS50902">
    <property type="entry name" value="FLAVODOXIN_LIKE"/>
    <property type="match status" value="1"/>
</dbReference>
<dbReference type="PROSITE" id="PS50903">
    <property type="entry name" value="RUBREDOXIN_LIKE"/>
    <property type="match status" value="1"/>
</dbReference>
<keyword id="KW-0963">Cytoplasm</keyword>
<keyword id="KW-0249">Electron transport</keyword>
<keyword id="KW-0285">Flavoprotein</keyword>
<keyword id="KW-0288">FMN</keyword>
<keyword id="KW-0408">Iron</keyword>
<keyword id="KW-0479">Metal-binding</keyword>
<keyword id="KW-0560">Oxidoreductase</keyword>
<keyword id="KW-1185">Reference proteome</keyword>
<keyword id="KW-0813">Transport</keyword>
<gene>
    <name evidence="1" type="primary">norV</name>
    <name evidence="1" type="synonym">flrD</name>
    <name type="ordered locus">VF_1782</name>
</gene>
<sequence length="496" mass="55873">MTIHIKNNVNWVGQRDWEVSDFHGTEFKMTKGTSYNSYLIQEEKTVLIDTVDHRFSHQFIQNLEMEIDLASIDYIVINHAEEDHSGALAALMEKIPGTPIYCTENAIDSIVGHHHHPEWNFNPIKTGDALDIGNGKQLIFVEAPMLHWPDSMMTYLTGDAILFSNDAFGQHYCDERLFNDEVDQTELMDQCLRYYANILTPFSALVTAKIKEVLSFNLPVDMIATSHGCVWRDNPTQIIHQYLEWADNYQEDRITIFYDSMSNNTRMMADAIAQGIHDVDPAVAVKVFNVSRQDKNDILTSVFRSKGILVGSSTMNNVMMPKIAGMLEEIAGLRFRAKKAGAFGSYGWNGGAVDRIHSRLTDAGFETAVGLKAKWRPDGQAMKLCREHGQFIAKQWALAPLTTTFNTINVDKKIQTIEEPVVLVEPSAELEKPATEVTSSKDAKQCMLCSVCNWVYDPEIGEPNQGVEPNTPWSSVPNDFLCPECHLGKDVFVEIK</sequence>
<evidence type="ECO:0000255" key="1">
    <source>
        <dbReference type="HAMAP-Rule" id="MF_01312"/>
    </source>
</evidence>
<comment type="function">
    <text evidence="1">Anaerobic nitric oxide reductase; uses NADH to detoxify nitric oxide (NO), protecting several 4Fe-4S NO-sensitive enzymes. Has at least 2 reductase partners, only one of which (NorW, flavorubredoxin reductase) has been identified. NO probably binds to the di-iron center; electrons enter from the NorW at rubredoxin and are transferred sequentially to the FMN center and the di-iron center. Also able to function as an aerobic oxygen reductase.</text>
</comment>
<comment type="cofactor">
    <cofactor evidence="1">
        <name>Fe cation</name>
        <dbReference type="ChEBI" id="CHEBI:24875"/>
    </cofactor>
    <text evidence="1">Binds 3 Fe cations per monomer.</text>
</comment>
<comment type="cofactor">
    <cofactor evidence="1">
        <name>FMN</name>
        <dbReference type="ChEBI" id="CHEBI:58210"/>
    </cofactor>
    <text evidence="1">Binds 1 FMN per monomer.</text>
</comment>
<comment type="pathway">
    <text evidence="1">Nitrogen metabolism; nitric oxide reduction.</text>
</comment>
<comment type="subunit">
    <text evidence="1">Homotetramer.</text>
</comment>
<comment type="subcellular location">
    <subcellularLocation>
        <location evidence="1">Cytoplasm</location>
    </subcellularLocation>
</comment>
<comment type="similarity">
    <text evidence="1">In the N-terminal section; belongs to the zinc metallo-hydrolase group 3 family.</text>
</comment>
<proteinExistence type="inferred from homology"/>
<accession>Q5E3W9</accession>
<name>NORV_ALIF1</name>